<protein>
    <recommendedName>
        <fullName evidence="1">Holliday junction branch migration complex subunit RuvB</fullName>
        <ecNumber evidence="1">3.6.4.-</ecNumber>
    </recommendedName>
</protein>
<accession>Q03R36</accession>
<feature type="chain" id="PRO_0000322802" description="Holliday junction branch migration complex subunit RuvB">
    <location>
        <begin position="1"/>
        <end position="338"/>
    </location>
</feature>
<feature type="region of interest" description="Disordered" evidence="2">
    <location>
        <begin position="1"/>
        <end position="22"/>
    </location>
</feature>
<feature type="region of interest" description="Large ATPase domain (RuvB-L)" evidence="1">
    <location>
        <begin position="4"/>
        <end position="185"/>
    </location>
</feature>
<feature type="region of interest" description="Small ATPAse domain (RuvB-S)" evidence="1">
    <location>
        <begin position="186"/>
        <end position="257"/>
    </location>
</feature>
<feature type="region of interest" description="Head domain (RuvB-H)" evidence="1">
    <location>
        <begin position="260"/>
        <end position="338"/>
    </location>
</feature>
<feature type="binding site" evidence="1">
    <location>
        <position position="24"/>
    </location>
    <ligand>
        <name>ATP</name>
        <dbReference type="ChEBI" id="CHEBI:30616"/>
    </ligand>
</feature>
<feature type="binding site" evidence="1">
    <location>
        <position position="25"/>
    </location>
    <ligand>
        <name>ATP</name>
        <dbReference type="ChEBI" id="CHEBI:30616"/>
    </ligand>
</feature>
<feature type="binding site" evidence="1">
    <location>
        <position position="66"/>
    </location>
    <ligand>
        <name>ATP</name>
        <dbReference type="ChEBI" id="CHEBI:30616"/>
    </ligand>
</feature>
<feature type="binding site" evidence="1">
    <location>
        <position position="69"/>
    </location>
    <ligand>
        <name>ATP</name>
        <dbReference type="ChEBI" id="CHEBI:30616"/>
    </ligand>
</feature>
<feature type="binding site" evidence="1">
    <location>
        <position position="70"/>
    </location>
    <ligand>
        <name>ATP</name>
        <dbReference type="ChEBI" id="CHEBI:30616"/>
    </ligand>
</feature>
<feature type="binding site" evidence="1">
    <location>
        <position position="70"/>
    </location>
    <ligand>
        <name>Mg(2+)</name>
        <dbReference type="ChEBI" id="CHEBI:18420"/>
    </ligand>
</feature>
<feature type="binding site" evidence="1">
    <location>
        <position position="71"/>
    </location>
    <ligand>
        <name>ATP</name>
        <dbReference type="ChEBI" id="CHEBI:30616"/>
    </ligand>
</feature>
<feature type="binding site" evidence="1">
    <location>
        <begin position="132"/>
        <end position="134"/>
    </location>
    <ligand>
        <name>ATP</name>
        <dbReference type="ChEBI" id="CHEBI:30616"/>
    </ligand>
</feature>
<feature type="binding site" evidence="1">
    <location>
        <position position="175"/>
    </location>
    <ligand>
        <name>ATP</name>
        <dbReference type="ChEBI" id="CHEBI:30616"/>
    </ligand>
</feature>
<feature type="binding site" evidence="1">
    <location>
        <position position="185"/>
    </location>
    <ligand>
        <name>ATP</name>
        <dbReference type="ChEBI" id="CHEBI:30616"/>
    </ligand>
</feature>
<feature type="binding site" evidence="1">
    <location>
        <position position="222"/>
    </location>
    <ligand>
        <name>ATP</name>
        <dbReference type="ChEBI" id="CHEBI:30616"/>
    </ligand>
</feature>
<feature type="binding site" evidence="1">
    <location>
        <position position="315"/>
    </location>
    <ligand>
        <name>DNA</name>
        <dbReference type="ChEBI" id="CHEBI:16991"/>
    </ligand>
</feature>
<feature type="binding site" evidence="1">
    <location>
        <position position="320"/>
    </location>
    <ligand>
        <name>DNA</name>
        <dbReference type="ChEBI" id="CHEBI:16991"/>
    </ligand>
</feature>
<proteinExistence type="inferred from homology"/>
<comment type="function">
    <text evidence="1">The RuvA-RuvB-RuvC complex processes Holliday junction (HJ) DNA during genetic recombination and DNA repair, while the RuvA-RuvB complex plays an important role in the rescue of blocked DNA replication forks via replication fork reversal (RFR). RuvA specifically binds to HJ cruciform DNA, conferring on it an open structure. The RuvB hexamer acts as an ATP-dependent pump, pulling dsDNA into and through the RuvAB complex. RuvB forms 2 homohexamers on either side of HJ DNA bound by 1 or 2 RuvA tetramers; 4 subunits per hexamer contact DNA at a time. Coordinated motions by a converter formed by DNA-disengaged RuvB subunits stimulates ATP hydrolysis and nucleotide exchange. Immobilization of the converter enables RuvB to convert the ATP-contained energy into a lever motion, pulling 2 nucleotides of DNA out of the RuvA tetramer per ATP hydrolyzed, thus driving DNA branch migration. The RuvB motors rotate together with the DNA substrate, which together with the progressing nucleotide cycle form the mechanistic basis for DNA recombination by continuous HJ branch migration. Branch migration allows RuvC to scan DNA until it finds its consensus sequence, where it cleaves and resolves cruciform DNA.</text>
</comment>
<comment type="catalytic activity">
    <reaction evidence="1">
        <text>ATP + H2O = ADP + phosphate + H(+)</text>
        <dbReference type="Rhea" id="RHEA:13065"/>
        <dbReference type="ChEBI" id="CHEBI:15377"/>
        <dbReference type="ChEBI" id="CHEBI:15378"/>
        <dbReference type="ChEBI" id="CHEBI:30616"/>
        <dbReference type="ChEBI" id="CHEBI:43474"/>
        <dbReference type="ChEBI" id="CHEBI:456216"/>
    </reaction>
</comment>
<comment type="subunit">
    <text evidence="1">Homohexamer. Forms an RuvA(8)-RuvB(12)-Holliday junction (HJ) complex. HJ DNA is sandwiched between 2 RuvA tetramers; dsDNA enters through RuvA and exits via RuvB. An RuvB hexamer assembles on each DNA strand where it exits the tetramer. Each RuvB hexamer is contacted by two RuvA subunits (via domain III) on 2 adjacent RuvB subunits; this complex drives branch migration. In the full resolvosome a probable DNA-RuvA(4)-RuvB(12)-RuvC(2) complex forms which resolves the HJ.</text>
</comment>
<comment type="subcellular location">
    <subcellularLocation>
        <location evidence="1">Cytoplasm</location>
    </subcellularLocation>
</comment>
<comment type="domain">
    <text evidence="1">Has 3 domains, the large (RuvB-L) and small ATPase (RuvB-S) domains and the C-terminal head (RuvB-H) domain. The head domain binds DNA, while the ATPase domains jointly bind ATP, ADP or are empty depending on the state of the subunit in the translocation cycle. During a single DNA translocation step the structure of each domain remains the same, but their relative positions change.</text>
</comment>
<comment type="similarity">
    <text evidence="1">Belongs to the RuvB family.</text>
</comment>
<keyword id="KW-0067">ATP-binding</keyword>
<keyword id="KW-0963">Cytoplasm</keyword>
<keyword id="KW-0227">DNA damage</keyword>
<keyword id="KW-0233">DNA recombination</keyword>
<keyword id="KW-0234">DNA repair</keyword>
<keyword id="KW-0238">DNA-binding</keyword>
<keyword id="KW-0378">Hydrolase</keyword>
<keyword id="KW-0547">Nucleotide-binding</keyword>
<keyword id="KW-1185">Reference proteome</keyword>
<reference key="1">
    <citation type="journal article" date="2006" name="Proc. Natl. Acad. Sci. U.S.A.">
        <title>Comparative genomics of the lactic acid bacteria.</title>
        <authorList>
            <person name="Makarova K.S."/>
            <person name="Slesarev A."/>
            <person name="Wolf Y.I."/>
            <person name="Sorokin A."/>
            <person name="Mirkin B."/>
            <person name="Koonin E.V."/>
            <person name="Pavlov A."/>
            <person name="Pavlova N."/>
            <person name="Karamychev V."/>
            <person name="Polouchine N."/>
            <person name="Shakhova V."/>
            <person name="Grigoriev I."/>
            <person name="Lou Y."/>
            <person name="Rohksar D."/>
            <person name="Lucas S."/>
            <person name="Huang K."/>
            <person name="Goodstein D.M."/>
            <person name="Hawkins T."/>
            <person name="Plengvidhya V."/>
            <person name="Welker D."/>
            <person name="Hughes J."/>
            <person name="Goh Y."/>
            <person name="Benson A."/>
            <person name="Baldwin K."/>
            <person name="Lee J.-H."/>
            <person name="Diaz-Muniz I."/>
            <person name="Dosti B."/>
            <person name="Smeianov V."/>
            <person name="Wechter W."/>
            <person name="Barabote R."/>
            <person name="Lorca G."/>
            <person name="Altermann E."/>
            <person name="Barrangou R."/>
            <person name="Ganesan B."/>
            <person name="Xie Y."/>
            <person name="Rawsthorne H."/>
            <person name="Tamir D."/>
            <person name="Parker C."/>
            <person name="Breidt F."/>
            <person name="Broadbent J.R."/>
            <person name="Hutkins R."/>
            <person name="O'Sullivan D."/>
            <person name="Steele J."/>
            <person name="Unlu G."/>
            <person name="Saier M.H. Jr."/>
            <person name="Klaenhammer T."/>
            <person name="Richardson P."/>
            <person name="Kozyavkin S."/>
            <person name="Weimer B.C."/>
            <person name="Mills D.A."/>
        </authorList>
    </citation>
    <scope>NUCLEOTIDE SEQUENCE [LARGE SCALE GENOMIC DNA]</scope>
    <source>
        <strain>ATCC 367 / BCRC 12310 / CIP 105137 / JCM 1170 / LMG 11437 / NCIMB 947 / NCTC 947</strain>
    </source>
</reference>
<dbReference type="EC" id="3.6.4.-" evidence="1"/>
<dbReference type="EMBL" id="CP000416">
    <property type="protein sequence ID" value="ABJ64336.1"/>
    <property type="molecule type" value="Genomic_DNA"/>
</dbReference>
<dbReference type="RefSeq" id="WP_011667966.1">
    <property type="nucleotide sequence ID" value="NC_008497.1"/>
</dbReference>
<dbReference type="SMR" id="Q03R36"/>
<dbReference type="STRING" id="387344.LVIS_1230"/>
<dbReference type="GeneID" id="56992621"/>
<dbReference type="KEGG" id="lbr:LVIS_1230"/>
<dbReference type="eggNOG" id="COG2255">
    <property type="taxonomic scope" value="Bacteria"/>
</dbReference>
<dbReference type="HOGENOM" id="CLU_055599_1_0_9"/>
<dbReference type="Proteomes" id="UP000001652">
    <property type="component" value="Chromosome"/>
</dbReference>
<dbReference type="GO" id="GO:0005737">
    <property type="term" value="C:cytoplasm"/>
    <property type="evidence" value="ECO:0007669"/>
    <property type="project" value="UniProtKB-SubCell"/>
</dbReference>
<dbReference type="GO" id="GO:0048476">
    <property type="term" value="C:Holliday junction resolvase complex"/>
    <property type="evidence" value="ECO:0007669"/>
    <property type="project" value="UniProtKB-UniRule"/>
</dbReference>
<dbReference type="GO" id="GO:0005524">
    <property type="term" value="F:ATP binding"/>
    <property type="evidence" value="ECO:0007669"/>
    <property type="project" value="UniProtKB-UniRule"/>
</dbReference>
<dbReference type="GO" id="GO:0016887">
    <property type="term" value="F:ATP hydrolysis activity"/>
    <property type="evidence" value="ECO:0007669"/>
    <property type="project" value="InterPro"/>
</dbReference>
<dbReference type="GO" id="GO:0000400">
    <property type="term" value="F:four-way junction DNA binding"/>
    <property type="evidence" value="ECO:0007669"/>
    <property type="project" value="UniProtKB-UniRule"/>
</dbReference>
<dbReference type="GO" id="GO:0009378">
    <property type="term" value="F:four-way junction helicase activity"/>
    <property type="evidence" value="ECO:0007669"/>
    <property type="project" value="InterPro"/>
</dbReference>
<dbReference type="GO" id="GO:0006310">
    <property type="term" value="P:DNA recombination"/>
    <property type="evidence" value="ECO:0007669"/>
    <property type="project" value="UniProtKB-UniRule"/>
</dbReference>
<dbReference type="GO" id="GO:0006281">
    <property type="term" value="P:DNA repair"/>
    <property type="evidence" value="ECO:0007669"/>
    <property type="project" value="UniProtKB-UniRule"/>
</dbReference>
<dbReference type="CDD" id="cd00009">
    <property type="entry name" value="AAA"/>
    <property type="match status" value="1"/>
</dbReference>
<dbReference type="Gene3D" id="1.10.8.60">
    <property type="match status" value="1"/>
</dbReference>
<dbReference type="Gene3D" id="3.40.50.300">
    <property type="entry name" value="P-loop containing nucleotide triphosphate hydrolases"/>
    <property type="match status" value="1"/>
</dbReference>
<dbReference type="Gene3D" id="1.10.10.10">
    <property type="entry name" value="Winged helix-like DNA-binding domain superfamily/Winged helix DNA-binding domain"/>
    <property type="match status" value="1"/>
</dbReference>
<dbReference type="HAMAP" id="MF_00016">
    <property type="entry name" value="DNA_HJ_migration_RuvB"/>
    <property type="match status" value="1"/>
</dbReference>
<dbReference type="InterPro" id="IPR003593">
    <property type="entry name" value="AAA+_ATPase"/>
</dbReference>
<dbReference type="InterPro" id="IPR041445">
    <property type="entry name" value="AAA_lid_4"/>
</dbReference>
<dbReference type="InterPro" id="IPR004605">
    <property type="entry name" value="DNA_helicase_Holl-junc_RuvB"/>
</dbReference>
<dbReference type="InterPro" id="IPR027417">
    <property type="entry name" value="P-loop_NTPase"/>
</dbReference>
<dbReference type="InterPro" id="IPR008824">
    <property type="entry name" value="RuvB-like_N"/>
</dbReference>
<dbReference type="InterPro" id="IPR008823">
    <property type="entry name" value="RuvB_C"/>
</dbReference>
<dbReference type="InterPro" id="IPR036388">
    <property type="entry name" value="WH-like_DNA-bd_sf"/>
</dbReference>
<dbReference type="InterPro" id="IPR036390">
    <property type="entry name" value="WH_DNA-bd_sf"/>
</dbReference>
<dbReference type="NCBIfam" id="NF000868">
    <property type="entry name" value="PRK00080.1"/>
    <property type="match status" value="1"/>
</dbReference>
<dbReference type="NCBIfam" id="TIGR00635">
    <property type="entry name" value="ruvB"/>
    <property type="match status" value="1"/>
</dbReference>
<dbReference type="PANTHER" id="PTHR42848">
    <property type="match status" value="1"/>
</dbReference>
<dbReference type="PANTHER" id="PTHR42848:SF1">
    <property type="entry name" value="HOLLIDAY JUNCTION BRANCH MIGRATION COMPLEX SUBUNIT RUVB"/>
    <property type="match status" value="1"/>
</dbReference>
<dbReference type="Pfam" id="PF17864">
    <property type="entry name" value="AAA_lid_4"/>
    <property type="match status" value="1"/>
</dbReference>
<dbReference type="Pfam" id="PF05491">
    <property type="entry name" value="RuvB_C"/>
    <property type="match status" value="1"/>
</dbReference>
<dbReference type="Pfam" id="PF05496">
    <property type="entry name" value="RuvB_N"/>
    <property type="match status" value="1"/>
</dbReference>
<dbReference type="SMART" id="SM00382">
    <property type="entry name" value="AAA"/>
    <property type="match status" value="1"/>
</dbReference>
<dbReference type="SUPFAM" id="SSF52540">
    <property type="entry name" value="P-loop containing nucleoside triphosphate hydrolases"/>
    <property type="match status" value="1"/>
</dbReference>
<dbReference type="SUPFAM" id="SSF46785">
    <property type="entry name" value="Winged helix' DNA-binding domain"/>
    <property type="match status" value="1"/>
</dbReference>
<evidence type="ECO:0000255" key="1">
    <source>
        <dbReference type="HAMAP-Rule" id="MF_00016"/>
    </source>
</evidence>
<evidence type="ECO:0000256" key="2">
    <source>
        <dbReference type="SAM" id="MobiDB-lite"/>
    </source>
</evidence>
<organism>
    <name type="scientific">Levilactobacillus brevis (strain ATCC 367 / BCRC 12310 / CIP 105137 / JCM 1170 / LMG 11437 / NCIMB 947 / NCTC 947)</name>
    <name type="common">Lactobacillus brevis</name>
    <dbReference type="NCBI Taxonomy" id="387344"/>
    <lineage>
        <taxon>Bacteria</taxon>
        <taxon>Bacillati</taxon>
        <taxon>Bacillota</taxon>
        <taxon>Bacilli</taxon>
        <taxon>Lactobacillales</taxon>
        <taxon>Lactobacillaceae</taxon>
        <taxon>Levilactobacillus</taxon>
    </lineage>
</organism>
<gene>
    <name evidence="1" type="primary">ruvB</name>
    <name type="ordered locus">LVIS_1230</name>
</gene>
<sequence>MVDDERVVSPETADDHEDSVEKSLRPQVLAQYIGQEPIKHELSVYIQAAKQREESLDHVLLYGPPGLGKTTLAMVIANEMGVQIRTTSGPAIEKPGDLVALLNELQPGDILFIDEIHRLPKIVEEMLYSAMEDFYIDIVVGQGPTAHPVHFPLPPFTLIGATTRAGLLSAPLRDRFGIVEHMAYYETTDLQEIVLRSADIFHTAIATEGAHEIALRSRGTPRIANRLLKRIRDFAEVAPDHDQIDLAIVDHALDLLRVDSAGLDATDIKLLETMIDYYNGGPVGLNTLAANIGEETETVAAMYEPYLLQRGYLKRTARGRVVTATGYQHLGRTMPDNN</sequence>
<name>RUVB_LEVBA</name>